<comment type="function">
    <text evidence="1">Catalyzes the rearrangement of 1-deoxy-D-xylulose 5-phosphate (DXP) to produce the thiazole phosphate moiety of thiamine. Sulfur is provided by the thiocarboxylate moiety of the carrier protein ThiS. In vitro, sulfur can be provided by H(2)S.</text>
</comment>
<comment type="catalytic activity">
    <reaction evidence="1">
        <text>[ThiS sulfur-carrier protein]-C-terminal-Gly-aminoethanethioate + 2-iminoacetate + 1-deoxy-D-xylulose 5-phosphate = [ThiS sulfur-carrier protein]-C-terminal Gly-Gly + 2-[(2R,5Z)-2-carboxy-4-methylthiazol-5(2H)-ylidene]ethyl phosphate + 2 H2O + H(+)</text>
        <dbReference type="Rhea" id="RHEA:26297"/>
        <dbReference type="Rhea" id="RHEA-COMP:12909"/>
        <dbReference type="Rhea" id="RHEA-COMP:19908"/>
        <dbReference type="ChEBI" id="CHEBI:15377"/>
        <dbReference type="ChEBI" id="CHEBI:15378"/>
        <dbReference type="ChEBI" id="CHEBI:57792"/>
        <dbReference type="ChEBI" id="CHEBI:62899"/>
        <dbReference type="ChEBI" id="CHEBI:77846"/>
        <dbReference type="ChEBI" id="CHEBI:90778"/>
        <dbReference type="ChEBI" id="CHEBI:232372"/>
        <dbReference type="EC" id="2.8.1.10"/>
    </reaction>
</comment>
<comment type="pathway">
    <text evidence="1">Cofactor biosynthesis; thiamine diphosphate biosynthesis.</text>
</comment>
<comment type="subunit">
    <text evidence="1">Homotetramer. Forms heterodimers with either ThiH or ThiS.</text>
</comment>
<comment type="subcellular location">
    <subcellularLocation>
        <location evidence="1">Cytoplasm</location>
    </subcellularLocation>
</comment>
<comment type="similarity">
    <text evidence="1">Belongs to the ThiG family.</text>
</comment>
<protein>
    <recommendedName>
        <fullName evidence="1">Thiazole synthase</fullName>
        <ecNumber evidence="1">2.8.1.10</ecNumber>
    </recommendedName>
</protein>
<reference key="1">
    <citation type="journal article" date="2008" name="J. Biotechnol.">
        <title>The lifestyle of Corynebacterium urealyticum derived from its complete genome sequence established by pyrosequencing.</title>
        <authorList>
            <person name="Tauch A."/>
            <person name="Trost E."/>
            <person name="Tilker A."/>
            <person name="Ludewig U."/>
            <person name="Schneiker S."/>
            <person name="Goesmann A."/>
            <person name="Arnold W."/>
            <person name="Bekel T."/>
            <person name="Brinkrolf K."/>
            <person name="Brune I."/>
            <person name="Goetker S."/>
            <person name="Kalinowski J."/>
            <person name="Kamp P.-B."/>
            <person name="Lobo F.P."/>
            <person name="Viehoever P."/>
            <person name="Weisshaar B."/>
            <person name="Soriano F."/>
            <person name="Droege M."/>
            <person name="Puehler A."/>
        </authorList>
    </citation>
    <scope>NUCLEOTIDE SEQUENCE [LARGE SCALE GENOMIC DNA]</scope>
    <source>
        <strain>ATCC 43042 / DSM 7109</strain>
    </source>
</reference>
<evidence type="ECO:0000255" key="1">
    <source>
        <dbReference type="HAMAP-Rule" id="MF_00443"/>
    </source>
</evidence>
<name>THIG_CORU7</name>
<organism>
    <name type="scientific">Corynebacterium urealyticum (strain ATCC 43042 / DSM 7109)</name>
    <dbReference type="NCBI Taxonomy" id="504474"/>
    <lineage>
        <taxon>Bacteria</taxon>
        <taxon>Bacillati</taxon>
        <taxon>Actinomycetota</taxon>
        <taxon>Actinomycetes</taxon>
        <taxon>Mycobacteriales</taxon>
        <taxon>Corynebacteriaceae</taxon>
        <taxon>Corynebacterium</taxon>
    </lineage>
</organism>
<sequence length="278" mass="28480">MLEIAGKKFDSHLIMGTGGATSQTLLEKALVASGTQLTTVAMRRFRAGNNTGTAGTSSGAAGGESVFGLLNRLGIDVLPNTAGCRTAKDAILTAQLAREALGTNWVKLELIADDRTLLPDVVELVDTCEMLVAEGFEVLAYTSDDPVVAKRLEDAGAAAVMPLGSPIGTGLGILNPHNIELICARASVPVLLDAGVGTASDAALAMELGCSGVLLASAVNRCQDPAAMATAMKHAVEAGRLAAAAGRIPQRTHAEGALASSSFEGLASWDEDWAEEVL</sequence>
<feature type="chain" id="PRO_1000196847" description="Thiazole synthase">
    <location>
        <begin position="1"/>
        <end position="278"/>
    </location>
</feature>
<feature type="active site" description="Schiff-base intermediate with DXP" evidence="1">
    <location>
        <position position="107"/>
    </location>
</feature>
<feature type="binding site" evidence="1">
    <location>
        <position position="168"/>
    </location>
    <ligand>
        <name>1-deoxy-D-xylulose 5-phosphate</name>
        <dbReference type="ChEBI" id="CHEBI:57792"/>
    </ligand>
</feature>
<feature type="binding site" evidence="1">
    <location>
        <begin position="194"/>
        <end position="195"/>
    </location>
    <ligand>
        <name>1-deoxy-D-xylulose 5-phosphate</name>
        <dbReference type="ChEBI" id="CHEBI:57792"/>
    </ligand>
</feature>
<feature type="binding site" evidence="1">
    <location>
        <begin position="216"/>
        <end position="217"/>
    </location>
    <ligand>
        <name>1-deoxy-D-xylulose 5-phosphate</name>
        <dbReference type="ChEBI" id="CHEBI:57792"/>
    </ligand>
</feature>
<proteinExistence type="inferred from homology"/>
<keyword id="KW-0963">Cytoplasm</keyword>
<keyword id="KW-1185">Reference proteome</keyword>
<keyword id="KW-0704">Schiff base</keyword>
<keyword id="KW-0784">Thiamine biosynthesis</keyword>
<keyword id="KW-0808">Transferase</keyword>
<gene>
    <name evidence="1" type="primary">thiG</name>
    <name type="ordered locus">cu1108</name>
</gene>
<dbReference type="EC" id="2.8.1.10" evidence="1"/>
<dbReference type="EMBL" id="AM942444">
    <property type="protein sequence ID" value="CAQ05068.1"/>
    <property type="molecule type" value="Genomic_DNA"/>
</dbReference>
<dbReference type="RefSeq" id="WP_012360356.1">
    <property type="nucleotide sequence ID" value="NC_010545.1"/>
</dbReference>
<dbReference type="SMR" id="B1VH27"/>
<dbReference type="STRING" id="504474.cu1108"/>
<dbReference type="GeneID" id="60603889"/>
<dbReference type="KEGG" id="cur:cu1108"/>
<dbReference type="eggNOG" id="COG2022">
    <property type="taxonomic scope" value="Bacteria"/>
</dbReference>
<dbReference type="HOGENOM" id="CLU_062233_1_0_11"/>
<dbReference type="UniPathway" id="UPA00060"/>
<dbReference type="Proteomes" id="UP000001727">
    <property type="component" value="Chromosome"/>
</dbReference>
<dbReference type="GO" id="GO:0005737">
    <property type="term" value="C:cytoplasm"/>
    <property type="evidence" value="ECO:0007669"/>
    <property type="project" value="UniProtKB-SubCell"/>
</dbReference>
<dbReference type="GO" id="GO:1990107">
    <property type="term" value="F:thiazole synthase activity"/>
    <property type="evidence" value="ECO:0007669"/>
    <property type="project" value="UniProtKB-EC"/>
</dbReference>
<dbReference type="GO" id="GO:0009229">
    <property type="term" value="P:thiamine diphosphate biosynthetic process"/>
    <property type="evidence" value="ECO:0007669"/>
    <property type="project" value="UniProtKB-UniRule"/>
</dbReference>
<dbReference type="CDD" id="cd04728">
    <property type="entry name" value="ThiG"/>
    <property type="match status" value="1"/>
</dbReference>
<dbReference type="Gene3D" id="3.20.20.70">
    <property type="entry name" value="Aldolase class I"/>
    <property type="match status" value="1"/>
</dbReference>
<dbReference type="HAMAP" id="MF_00443">
    <property type="entry name" value="ThiG"/>
    <property type="match status" value="1"/>
</dbReference>
<dbReference type="InterPro" id="IPR013785">
    <property type="entry name" value="Aldolase_TIM"/>
</dbReference>
<dbReference type="InterPro" id="IPR033983">
    <property type="entry name" value="Thiazole_synthase_ThiG"/>
</dbReference>
<dbReference type="InterPro" id="IPR008867">
    <property type="entry name" value="ThiG"/>
</dbReference>
<dbReference type="PANTHER" id="PTHR34266">
    <property type="entry name" value="THIAZOLE SYNTHASE"/>
    <property type="match status" value="1"/>
</dbReference>
<dbReference type="PANTHER" id="PTHR34266:SF2">
    <property type="entry name" value="THIAZOLE SYNTHASE"/>
    <property type="match status" value="1"/>
</dbReference>
<dbReference type="Pfam" id="PF05690">
    <property type="entry name" value="ThiG"/>
    <property type="match status" value="1"/>
</dbReference>
<dbReference type="SUPFAM" id="SSF110399">
    <property type="entry name" value="ThiG-like"/>
    <property type="match status" value="1"/>
</dbReference>
<accession>B1VH27</accession>